<reference key="1">
    <citation type="journal article" date="1998" name="Nature">
        <title>Deciphering the biology of Mycobacterium tuberculosis from the complete genome sequence.</title>
        <authorList>
            <person name="Cole S.T."/>
            <person name="Brosch R."/>
            <person name="Parkhill J."/>
            <person name="Garnier T."/>
            <person name="Churcher C.M."/>
            <person name="Harris D.E."/>
            <person name="Gordon S.V."/>
            <person name="Eiglmeier K."/>
            <person name="Gas S."/>
            <person name="Barry C.E. III"/>
            <person name="Tekaia F."/>
            <person name="Badcock K."/>
            <person name="Basham D."/>
            <person name="Brown D."/>
            <person name="Chillingworth T."/>
            <person name="Connor R."/>
            <person name="Davies R.M."/>
            <person name="Devlin K."/>
            <person name="Feltwell T."/>
            <person name="Gentles S."/>
            <person name="Hamlin N."/>
            <person name="Holroyd S."/>
            <person name="Hornsby T."/>
            <person name="Jagels K."/>
            <person name="Krogh A."/>
            <person name="McLean J."/>
            <person name="Moule S."/>
            <person name="Murphy L.D."/>
            <person name="Oliver S."/>
            <person name="Osborne J."/>
            <person name="Quail M.A."/>
            <person name="Rajandream M.A."/>
            <person name="Rogers J."/>
            <person name="Rutter S."/>
            <person name="Seeger K."/>
            <person name="Skelton S."/>
            <person name="Squares S."/>
            <person name="Squares R."/>
            <person name="Sulston J.E."/>
            <person name="Taylor K."/>
            <person name="Whitehead S."/>
            <person name="Barrell B.G."/>
        </authorList>
    </citation>
    <scope>NUCLEOTIDE SEQUENCE [LARGE SCALE GENOMIC DNA]</scope>
    <source>
        <strain>ATCC 25618 / H37Rv</strain>
    </source>
</reference>
<reference key="2">
    <citation type="journal article" date="2004" name="Nature">
        <title>Enzymic activation and transfer of fatty acids as acyl-adenylates in mycobacteria.</title>
        <authorList>
            <person name="Trivedi O.A."/>
            <person name="Arora P."/>
            <person name="Sridharan V."/>
            <person name="Tickoo R."/>
            <person name="Mohanty D."/>
            <person name="Gokhale R.S."/>
        </authorList>
    </citation>
    <scope>FUNCTION AS AN ACYL-COA SYNTHETASE</scope>
    <scope>CATALYTIC ACTIVITY</scope>
    <source>
        <strain>ATCC 25618 / H37Rv</strain>
    </source>
</reference>
<reference key="3">
    <citation type="journal article" date="2009" name="Nat. Chem. Biol.">
        <title>Mechanistic and functional insights into fatty acid activation in Mycobacterium tuberculosis.</title>
        <authorList>
            <person name="Arora P."/>
            <person name="Goyal A."/>
            <person name="Natarajan V.T."/>
            <person name="Rajakumara E."/>
            <person name="Verma P."/>
            <person name="Gupta R."/>
            <person name="Yousuf M."/>
            <person name="Trivedi O.A."/>
            <person name="Mohanty D."/>
            <person name="Tyagi A."/>
            <person name="Sankaranarayanan R."/>
            <person name="Gokhale R.S."/>
        </authorList>
    </citation>
    <scope>FUNCTION</scope>
    <scope>CATALYTIC ACTIVITY</scope>
</reference>
<reference key="4">
    <citation type="journal article" date="2011" name="Mol. Cell. Proteomics">
        <title>Proteogenomic analysis of Mycobacterium tuberculosis by high resolution mass spectrometry.</title>
        <authorList>
            <person name="Kelkar D.S."/>
            <person name="Kumar D."/>
            <person name="Kumar P."/>
            <person name="Balakrishnan L."/>
            <person name="Muthusamy B."/>
            <person name="Yadav A.K."/>
            <person name="Shrivastava P."/>
            <person name="Marimuthu A."/>
            <person name="Anand S."/>
            <person name="Sundaram H."/>
            <person name="Kingsbury R."/>
            <person name="Harsha H.C."/>
            <person name="Nair B."/>
            <person name="Prasad T.S."/>
            <person name="Chauhan D.S."/>
            <person name="Katoch K."/>
            <person name="Katoch V.M."/>
            <person name="Kumar P."/>
            <person name="Chaerkady R."/>
            <person name="Ramachandran S."/>
            <person name="Dash D."/>
            <person name="Pandey A."/>
        </authorList>
    </citation>
    <scope>IDENTIFICATION BY MASS SPECTROMETRY [LARGE SCALE ANALYSIS]</scope>
    <source>
        <strain>ATCC 25618 / H37Rv</strain>
    </source>
</reference>
<reference key="5">
    <citation type="journal article" date="2014" name="J. Bacteriol.">
        <title>Actinobacterial acyl coenzyme A synthetases involved in steroid side-chain catabolism.</title>
        <authorList>
            <person name="Casabon I."/>
            <person name="Swain K."/>
            <person name="Crowe A.M."/>
            <person name="Eltis L.D."/>
            <person name="Mohn W.W."/>
        </authorList>
    </citation>
    <scope>FUNCTION</scope>
    <scope>CATALYTIC ACTIVITY</scope>
</reference>
<accession>O53551</accession>
<accession>L0TCQ9</accession>
<keyword id="KW-0067">ATP-binding</keyword>
<keyword id="KW-0276">Fatty acid metabolism</keyword>
<keyword id="KW-0436">Ligase</keyword>
<keyword id="KW-0443">Lipid metabolism</keyword>
<keyword id="KW-0547">Nucleotide-binding</keyword>
<keyword id="KW-1185">Reference proteome</keyword>
<dbReference type="EC" id="6.2.1.2" evidence="2"/>
<dbReference type="EC" id="6.2.1.3" evidence="1 2"/>
<dbReference type="EMBL" id="AL123456">
    <property type="protein sequence ID" value="CCP46328.1"/>
    <property type="molecule type" value="Genomic_DNA"/>
</dbReference>
<dbReference type="PIR" id="D70806">
    <property type="entry name" value="D70806"/>
</dbReference>
<dbReference type="RefSeq" id="NP_218023.1">
    <property type="nucleotide sequence ID" value="NC_000962.3"/>
</dbReference>
<dbReference type="RefSeq" id="WP_003901655.1">
    <property type="nucleotide sequence ID" value="NZ_NVQJ01000042.1"/>
</dbReference>
<dbReference type="SMR" id="O53551"/>
<dbReference type="STRING" id="83332.Rv3506"/>
<dbReference type="ChEMBL" id="CHEMBL5783"/>
<dbReference type="SwissLipids" id="SLP:000000982"/>
<dbReference type="PaxDb" id="83332-Rv3506"/>
<dbReference type="DNASU" id="888251"/>
<dbReference type="GeneID" id="888251"/>
<dbReference type="KEGG" id="mtu:Rv3506"/>
<dbReference type="KEGG" id="mtv:RVBD_3506"/>
<dbReference type="TubercuList" id="Rv3506"/>
<dbReference type="eggNOG" id="COG0318">
    <property type="taxonomic scope" value="Bacteria"/>
</dbReference>
<dbReference type="InParanoid" id="O53551"/>
<dbReference type="OrthoDB" id="9803968at2"/>
<dbReference type="PhylomeDB" id="O53551"/>
<dbReference type="UniPathway" id="UPA00094"/>
<dbReference type="PRO" id="PR:O53551"/>
<dbReference type="Proteomes" id="UP000001584">
    <property type="component" value="Chromosome"/>
</dbReference>
<dbReference type="GO" id="GO:0005829">
    <property type="term" value="C:cytosol"/>
    <property type="evidence" value="ECO:0007005"/>
    <property type="project" value="MTBBASE"/>
</dbReference>
<dbReference type="GO" id="GO:0005886">
    <property type="term" value="C:plasma membrane"/>
    <property type="evidence" value="ECO:0007005"/>
    <property type="project" value="MTBBASE"/>
</dbReference>
<dbReference type="GO" id="GO:0005524">
    <property type="term" value="F:ATP binding"/>
    <property type="evidence" value="ECO:0007669"/>
    <property type="project" value="UniProtKB-KW"/>
</dbReference>
<dbReference type="GO" id="GO:0047747">
    <property type="term" value="F:cholate-CoA ligase activity"/>
    <property type="evidence" value="ECO:0007669"/>
    <property type="project" value="RHEA"/>
</dbReference>
<dbReference type="GO" id="GO:0005324">
    <property type="term" value="F:long-chain fatty acid transmembrane transporter activity"/>
    <property type="evidence" value="ECO:0000318"/>
    <property type="project" value="GO_Central"/>
</dbReference>
<dbReference type="GO" id="GO:0004467">
    <property type="term" value="F:long-chain fatty acid-CoA ligase activity"/>
    <property type="evidence" value="ECO:0000314"/>
    <property type="project" value="MTBBASE"/>
</dbReference>
<dbReference type="GO" id="GO:0031956">
    <property type="term" value="F:medium-chain fatty acid-CoA ligase activity"/>
    <property type="evidence" value="ECO:0007669"/>
    <property type="project" value="UniProtKB-EC"/>
</dbReference>
<dbReference type="GO" id="GO:0071766">
    <property type="term" value="P:Actinobacterium-type cell wall biogenesis"/>
    <property type="evidence" value="ECO:0000314"/>
    <property type="project" value="UniProtKB"/>
</dbReference>
<dbReference type="GO" id="GO:0008610">
    <property type="term" value="P:lipid biosynthetic process"/>
    <property type="evidence" value="ECO:0000314"/>
    <property type="project" value="UniProtKB"/>
</dbReference>
<dbReference type="GO" id="GO:0042759">
    <property type="term" value="P:long-chain fatty acid biosynthetic process"/>
    <property type="evidence" value="ECO:0000314"/>
    <property type="project" value="MTBBASE"/>
</dbReference>
<dbReference type="GO" id="GO:0044539">
    <property type="term" value="P:long-chain fatty acid import into cell"/>
    <property type="evidence" value="ECO:0000318"/>
    <property type="project" value="GO_Central"/>
</dbReference>
<dbReference type="GO" id="GO:0001676">
    <property type="term" value="P:long-chain fatty acid metabolic process"/>
    <property type="evidence" value="ECO:0000318"/>
    <property type="project" value="GO_Central"/>
</dbReference>
<dbReference type="FunFam" id="3.30.300.30:FF:000034">
    <property type="entry name" value="Fatty-acid-CoA ligase FadD17"/>
    <property type="match status" value="1"/>
</dbReference>
<dbReference type="FunFam" id="3.40.50.12780:FF:000042">
    <property type="entry name" value="Possible fatty-acid-CoA ligase fadD1"/>
    <property type="match status" value="1"/>
</dbReference>
<dbReference type="Gene3D" id="3.30.300.30">
    <property type="match status" value="1"/>
</dbReference>
<dbReference type="Gene3D" id="3.40.50.12780">
    <property type="entry name" value="N-terminal domain of ligase-like"/>
    <property type="match status" value="1"/>
</dbReference>
<dbReference type="InterPro" id="IPR025110">
    <property type="entry name" value="AMP-bd_C"/>
</dbReference>
<dbReference type="InterPro" id="IPR045851">
    <property type="entry name" value="AMP-bd_C_sf"/>
</dbReference>
<dbReference type="InterPro" id="IPR020845">
    <property type="entry name" value="AMP-binding_CS"/>
</dbReference>
<dbReference type="InterPro" id="IPR000873">
    <property type="entry name" value="AMP-dep_synth/lig_dom"/>
</dbReference>
<dbReference type="InterPro" id="IPR042099">
    <property type="entry name" value="ANL_N_sf"/>
</dbReference>
<dbReference type="NCBIfam" id="NF005897">
    <property type="entry name" value="PRK07867.1"/>
    <property type="match status" value="1"/>
</dbReference>
<dbReference type="PANTHER" id="PTHR43107:SF15">
    <property type="entry name" value="FATTY ACID TRANSPORT PROTEIN 3, ISOFORM A"/>
    <property type="match status" value="1"/>
</dbReference>
<dbReference type="PANTHER" id="PTHR43107">
    <property type="entry name" value="LONG-CHAIN FATTY ACID TRANSPORT PROTEIN"/>
    <property type="match status" value="1"/>
</dbReference>
<dbReference type="Pfam" id="PF00501">
    <property type="entry name" value="AMP-binding"/>
    <property type="match status" value="1"/>
</dbReference>
<dbReference type="Pfam" id="PF13193">
    <property type="entry name" value="AMP-binding_C"/>
    <property type="match status" value="1"/>
</dbReference>
<dbReference type="SUPFAM" id="SSF56801">
    <property type="entry name" value="Acetyl-CoA synthetase-like"/>
    <property type="match status" value="1"/>
</dbReference>
<dbReference type="PROSITE" id="PS00455">
    <property type="entry name" value="AMP_BINDING"/>
    <property type="match status" value="1"/>
</dbReference>
<comment type="function">
    <text evidence="1 2 3">Catalyzes the activation of medium/long-chain fatty acids as acyl-coenzyme A (acyl-CoA), which are then transferred to the multifunctional polyketide synthase (PKS) type III for further chain extension (PubMed:15042094, PubMed:19182784). Also involved in steroid side-chain degradation. Activates cholesterol metabolites with a C5 side chain, including cholate and chenodeoxycholate (PubMed:24244004).</text>
</comment>
<comment type="catalytic activity">
    <reaction evidence="2">
        <text>a medium-chain fatty acid + ATP + CoA = a medium-chain fatty acyl-CoA + AMP + diphosphate</text>
        <dbReference type="Rhea" id="RHEA:48340"/>
        <dbReference type="ChEBI" id="CHEBI:30616"/>
        <dbReference type="ChEBI" id="CHEBI:33019"/>
        <dbReference type="ChEBI" id="CHEBI:57287"/>
        <dbReference type="ChEBI" id="CHEBI:59558"/>
        <dbReference type="ChEBI" id="CHEBI:90546"/>
        <dbReference type="ChEBI" id="CHEBI:456215"/>
        <dbReference type="EC" id="6.2.1.2"/>
    </reaction>
    <physiologicalReaction direction="left-to-right" evidence="2">
        <dbReference type="Rhea" id="RHEA:48341"/>
    </physiologicalReaction>
</comment>
<comment type="catalytic activity">
    <reaction evidence="1 2">
        <text>a long-chain fatty acid + ATP + CoA = a long-chain fatty acyl-CoA + AMP + diphosphate</text>
        <dbReference type="Rhea" id="RHEA:15421"/>
        <dbReference type="ChEBI" id="CHEBI:30616"/>
        <dbReference type="ChEBI" id="CHEBI:33019"/>
        <dbReference type="ChEBI" id="CHEBI:57287"/>
        <dbReference type="ChEBI" id="CHEBI:57560"/>
        <dbReference type="ChEBI" id="CHEBI:83139"/>
        <dbReference type="ChEBI" id="CHEBI:456215"/>
        <dbReference type="EC" id="6.2.1.3"/>
    </reaction>
    <physiologicalReaction direction="left-to-right" evidence="2">
        <dbReference type="Rhea" id="RHEA:15422"/>
    </physiologicalReaction>
</comment>
<comment type="catalytic activity">
    <reaction evidence="2">
        <text>hexanoate + ATP + CoA = hexanoyl-CoA + AMP + diphosphate</text>
        <dbReference type="Rhea" id="RHEA:43740"/>
        <dbReference type="ChEBI" id="CHEBI:17120"/>
        <dbReference type="ChEBI" id="CHEBI:30616"/>
        <dbReference type="ChEBI" id="CHEBI:33019"/>
        <dbReference type="ChEBI" id="CHEBI:57287"/>
        <dbReference type="ChEBI" id="CHEBI:62620"/>
        <dbReference type="ChEBI" id="CHEBI:456215"/>
    </reaction>
    <physiologicalReaction direction="left-to-right" evidence="2">
        <dbReference type="Rhea" id="RHEA:43741"/>
    </physiologicalReaction>
</comment>
<comment type="catalytic activity">
    <reaction evidence="2">
        <text>dodecanoate + ATP + CoA = dodecanoyl-CoA + AMP + diphosphate</text>
        <dbReference type="Rhea" id="RHEA:33623"/>
        <dbReference type="ChEBI" id="CHEBI:18262"/>
        <dbReference type="ChEBI" id="CHEBI:30616"/>
        <dbReference type="ChEBI" id="CHEBI:33019"/>
        <dbReference type="ChEBI" id="CHEBI:57287"/>
        <dbReference type="ChEBI" id="CHEBI:57375"/>
        <dbReference type="ChEBI" id="CHEBI:456215"/>
    </reaction>
    <physiologicalReaction direction="left-to-right" evidence="2">
        <dbReference type="Rhea" id="RHEA:33624"/>
    </physiologicalReaction>
</comment>
<comment type="catalytic activity">
    <reaction evidence="2">
        <text>hexadecanoate + ATP + CoA = hexadecanoyl-CoA + AMP + diphosphate</text>
        <dbReference type="Rhea" id="RHEA:30751"/>
        <dbReference type="ChEBI" id="CHEBI:7896"/>
        <dbReference type="ChEBI" id="CHEBI:30616"/>
        <dbReference type="ChEBI" id="CHEBI:33019"/>
        <dbReference type="ChEBI" id="CHEBI:57287"/>
        <dbReference type="ChEBI" id="CHEBI:57379"/>
        <dbReference type="ChEBI" id="CHEBI:456215"/>
    </reaction>
    <physiologicalReaction direction="left-to-right" evidence="2">
        <dbReference type="Rhea" id="RHEA:30752"/>
    </physiologicalReaction>
</comment>
<comment type="catalytic activity">
    <reaction evidence="3">
        <text>cholate + ATP + CoA = choloyl-CoA + AMP + diphosphate</text>
        <dbReference type="Rhea" id="RHEA:23532"/>
        <dbReference type="ChEBI" id="CHEBI:29747"/>
        <dbReference type="ChEBI" id="CHEBI:30616"/>
        <dbReference type="ChEBI" id="CHEBI:33019"/>
        <dbReference type="ChEBI" id="CHEBI:57287"/>
        <dbReference type="ChEBI" id="CHEBI:57373"/>
        <dbReference type="ChEBI" id="CHEBI:456215"/>
    </reaction>
    <physiologicalReaction direction="left-to-right" evidence="3">
        <dbReference type="Rhea" id="RHEA:23533"/>
    </physiologicalReaction>
</comment>
<comment type="catalytic activity">
    <reaction evidence="3">
        <text>chenodeoxycholate + ATP + CoA = chenodeoxycholoyl-CoA + AMP + diphosphate</text>
        <dbReference type="Rhea" id="RHEA:43764"/>
        <dbReference type="ChEBI" id="CHEBI:30616"/>
        <dbReference type="ChEBI" id="CHEBI:33019"/>
        <dbReference type="ChEBI" id="CHEBI:36234"/>
        <dbReference type="ChEBI" id="CHEBI:57287"/>
        <dbReference type="ChEBI" id="CHEBI:62989"/>
        <dbReference type="ChEBI" id="CHEBI:456215"/>
    </reaction>
    <physiologicalReaction direction="left-to-right" evidence="3">
        <dbReference type="Rhea" id="RHEA:43765"/>
    </physiologicalReaction>
</comment>
<comment type="pathway">
    <text evidence="6">Lipid metabolism; fatty acid biosynthesis.</text>
</comment>
<comment type="similarity">
    <text evidence="6">Belongs to the ATP-dependent AMP-binding enzyme family.</text>
</comment>
<sequence length="502" mass="53739">MTPTHPTVTELLLPLSEIDDRGVYFEDSFTSWRDHIRHGAAIAAALRERLDPARPPHVGVLLQNTPFFSATLVAGALSGIVPVGLNPVRRGAALAGDIAKADCQLVLTGSGSAEVPADVEHINVDSPEWTDEVAAHRDTEVRFRSADLADLFMLIFTSGTSGDPKAVKCSHRKVAIAGVTITQRFSLGRDDVCYVSMPLFHSNAVLVGWAVAAACQGSMALRRKFSASQFLADVRRYGATYANYVGKPLSYVLATPELPDDADNPLRAVYGNEGVPGDIDRFGRRFGCVVMDGFGSTEGGVAITRTLDTPAGALGPLPGGIQIVDPDTGEPCPTGVVGELVNTAGPGGFEGYYNDEAAEAERMAGGVYHSGDLAYRDDAGYAYFAGRLGDWMRVDGENLGTAPIERVLMRYPDATEVAVYPVPDPVVGDQVMAALVLAPGTKFDADKFRAFLTEQPDLGHKQWPSYVRVSAGLPRTMTFKVIKRQLSAEGVACADPVWPIRR</sequence>
<organism>
    <name type="scientific">Mycobacterium tuberculosis (strain ATCC 25618 / H37Rv)</name>
    <dbReference type="NCBI Taxonomy" id="83332"/>
    <lineage>
        <taxon>Bacteria</taxon>
        <taxon>Bacillati</taxon>
        <taxon>Actinomycetota</taxon>
        <taxon>Actinomycetes</taxon>
        <taxon>Mycobacteriales</taxon>
        <taxon>Mycobacteriaceae</taxon>
        <taxon>Mycobacterium</taxon>
        <taxon>Mycobacterium tuberculosis complex</taxon>
    </lineage>
</organism>
<evidence type="ECO:0000269" key="1">
    <source>
    </source>
</evidence>
<evidence type="ECO:0000269" key="2">
    <source>
    </source>
</evidence>
<evidence type="ECO:0000269" key="3">
    <source>
    </source>
</evidence>
<evidence type="ECO:0000303" key="4">
    <source>
    </source>
</evidence>
<evidence type="ECO:0000303" key="5">
    <source>
    </source>
</evidence>
<evidence type="ECO:0000305" key="6"/>
<feature type="chain" id="PRO_0000406787" description="Medium/long-chain-fatty-acid--CoA ligase FadD17">
    <location>
        <begin position="1"/>
        <end position="502"/>
    </location>
</feature>
<protein>
    <recommendedName>
        <fullName>Medium/long-chain-fatty-acid--CoA ligase FadD17</fullName>
        <shortName>FACL</shortName>
        <ecNumber evidence="2">6.2.1.2</ecNumber>
        <ecNumber evidence="1 2">6.2.1.3</ecNumber>
    </recommendedName>
    <alternativeName>
        <fullName>Acyl-CoA synthetase</fullName>
    </alternativeName>
    <alternativeName>
        <fullName evidence="4">FACL17</fullName>
    </alternativeName>
    <alternativeName>
        <fullName evidence="5">Steroid-24-oyl-CoA synthetase</fullName>
    </alternativeName>
</protein>
<gene>
    <name type="primary">fadD17</name>
    <name type="ordered locus">Rv3506</name>
</gene>
<name>FAC17_MYCTU</name>
<proteinExistence type="evidence at protein level"/>